<dbReference type="PIR" id="JX0304">
    <property type="entry name" value="JX0304"/>
</dbReference>
<dbReference type="SMR" id="Q7M2P1"/>
<dbReference type="STRING" id="9823.ENSSSCP00000050958"/>
<dbReference type="InParanoid" id="Q7M2P1"/>
<dbReference type="OMA" id="TTNTKRW"/>
<dbReference type="Proteomes" id="UP000008227">
    <property type="component" value="Unplaced"/>
</dbReference>
<dbReference type="Proteomes" id="UP000314985">
    <property type="component" value="Unplaced"/>
</dbReference>
<dbReference type="Proteomes" id="UP000694570">
    <property type="component" value="Unplaced"/>
</dbReference>
<dbReference type="Proteomes" id="UP000694571">
    <property type="component" value="Unplaced"/>
</dbReference>
<dbReference type="Proteomes" id="UP000694720">
    <property type="component" value="Unplaced"/>
</dbReference>
<dbReference type="Proteomes" id="UP000694722">
    <property type="component" value="Unplaced"/>
</dbReference>
<dbReference type="Proteomes" id="UP000694723">
    <property type="component" value="Unplaced"/>
</dbReference>
<dbReference type="Proteomes" id="UP000694724">
    <property type="component" value="Unplaced"/>
</dbReference>
<dbReference type="Proteomes" id="UP000694725">
    <property type="component" value="Unplaced"/>
</dbReference>
<dbReference type="Proteomes" id="UP000694726">
    <property type="component" value="Unplaced"/>
</dbReference>
<dbReference type="Proteomes" id="UP000694727">
    <property type="component" value="Unplaced"/>
</dbReference>
<dbReference type="Proteomes" id="UP000694728">
    <property type="component" value="Unplaced"/>
</dbReference>
<dbReference type="GO" id="GO:0000786">
    <property type="term" value="C:nucleosome"/>
    <property type="evidence" value="ECO:0007669"/>
    <property type="project" value="UniProtKB-KW"/>
</dbReference>
<dbReference type="GO" id="GO:0005634">
    <property type="term" value="C:nucleus"/>
    <property type="evidence" value="ECO:0007669"/>
    <property type="project" value="UniProtKB-SubCell"/>
</dbReference>
<dbReference type="GO" id="GO:0003677">
    <property type="term" value="F:DNA binding"/>
    <property type="evidence" value="ECO:0007669"/>
    <property type="project" value="UniProtKB-KW"/>
</dbReference>
<dbReference type="GO" id="GO:0030154">
    <property type="term" value="P:cell differentiation"/>
    <property type="evidence" value="ECO:0007669"/>
    <property type="project" value="UniProtKB-KW"/>
</dbReference>
<dbReference type="GO" id="GO:0007283">
    <property type="term" value="P:spermatogenesis"/>
    <property type="evidence" value="ECO:0007669"/>
    <property type="project" value="UniProtKB-KW"/>
</dbReference>
<proteinExistence type="evidence at protein level"/>
<protein>
    <recommendedName>
        <fullName>Spermatid nuclear transition protein 3</fullName>
        <shortName>STP-3</shortName>
        <shortName>TP-3</shortName>
        <shortName>TP3</shortName>
    </recommendedName>
</protein>
<evidence type="ECO:0000256" key="1">
    <source>
        <dbReference type="SAM" id="MobiDB-lite"/>
    </source>
</evidence>
<name>STP3_PIG</name>
<reference key="1">
    <citation type="journal article" date="1994" name="J. Biochem.">
        <title>The amino acid sequence of a boar transition protein 3.</title>
        <authorList>
            <person name="Akama K."/>
            <person name="Oka S."/>
            <person name="Tobita T."/>
            <person name="Hayashi H."/>
        </authorList>
    </citation>
    <scope>PROTEIN SEQUENCE</scope>
    <source>
        <tissue>Spermatid</tissue>
    </source>
</reference>
<gene>
    <name type="primary">TNP3</name>
</gene>
<organism>
    <name type="scientific">Sus scrofa</name>
    <name type="common">Pig</name>
    <dbReference type="NCBI Taxonomy" id="9823"/>
    <lineage>
        <taxon>Eukaryota</taxon>
        <taxon>Metazoa</taxon>
        <taxon>Chordata</taxon>
        <taxon>Craniata</taxon>
        <taxon>Vertebrata</taxon>
        <taxon>Euteleostomi</taxon>
        <taxon>Mammalia</taxon>
        <taxon>Eutheria</taxon>
        <taxon>Laurasiatheria</taxon>
        <taxon>Artiodactyla</taxon>
        <taxon>Suina</taxon>
        <taxon>Suidae</taxon>
        <taxon>Sus</taxon>
    </lineage>
</organism>
<keyword id="KW-0158">Chromosome</keyword>
<keyword id="KW-0217">Developmental protein</keyword>
<keyword id="KW-0221">Differentiation</keyword>
<keyword id="KW-0903">Direct protein sequencing</keyword>
<keyword id="KW-0238">DNA-binding</keyword>
<keyword id="KW-0544">Nucleosome core</keyword>
<keyword id="KW-0539">Nucleus</keyword>
<keyword id="KW-1185">Reference proteome</keyword>
<keyword id="KW-0744">Spermatogenesis</keyword>
<comment type="function">
    <text>Involved in nuclear basic protein transition: histones are replaced by spermatid specific proteins which are themselves replaced by protamines in late spermatids.</text>
</comment>
<comment type="subcellular location">
    <subcellularLocation>
        <location>Nucleus</location>
    </subcellularLocation>
    <subcellularLocation>
        <location>Chromosome</location>
    </subcellularLocation>
</comment>
<feature type="chain" id="PRO_0000191434" description="Spermatid nuclear transition protein 3">
    <location>
        <begin position="1"/>
        <end position="76"/>
    </location>
</feature>
<feature type="region of interest" description="Disordered" evidence="1">
    <location>
        <begin position="1"/>
        <end position="34"/>
    </location>
</feature>
<feature type="region of interest" description="Disordered" evidence="1">
    <location>
        <begin position="56"/>
        <end position="76"/>
    </location>
</feature>
<feature type="compositionally biased region" description="Polar residues" evidence="1">
    <location>
        <begin position="1"/>
        <end position="11"/>
    </location>
</feature>
<feature type="compositionally biased region" description="Basic residues" evidence="1">
    <location>
        <begin position="16"/>
        <end position="34"/>
    </location>
</feature>
<accession>Q7M2P1</accession>
<sequence length="76" mass="9134">AKVTEKSWQPQTTSTKRWKKRKTPSQPRSRGKVRKIYKKVKRPLHVCSRKKYSPKVITTSRRQKRARRANKFETIP</sequence>